<keyword id="KW-0963">Cytoplasm</keyword>
<keyword id="KW-0238">DNA-binding</keyword>
<keyword id="KW-1185">Reference proteome</keyword>
<keyword id="KW-0804">Transcription</keyword>
<keyword id="KW-0805">Transcription regulation</keyword>
<organism>
    <name type="scientific">Myxococcus xanthus (strain DK1622)</name>
    <dbReference type="NCBI Taxonomy" id="246197"/>
    <lineage>
        <taxon>Bacteria</taxon>
        <taxon>Pseudomonadati</taxon>
        <taxon>Myxococcota</taxon>
        <taxon>Myxococcia</taxon>
        <taxon>Myxococcales</taxon>
        <taxon>Cystobacterineae</taxon>
        <taxon>Myxococcaceae</taxon>
        <taxon>Myxococcus</taxon>
    </lineage>
</organism>
<comment type="subcellular location">
    <subcellularLocation>
        <location evidence="1">Cytoplasm</location>
    </subcellularLocation>
</comment>
<comment type="similarity">
    <text evidence="1">Belongs to the TACO1 family.</text>
</comment>
<accession>Q1D2J3</accession>
<protein>
    <recommendedName>
        <fullName evidence="1">Probable transcriptional regulatory protein MXAN_4974</fullName>
    </recommendedName>
</protein>
<name>Y4974_MYXXD</name>
<reference key="1">
    <citation type="journal article" date="2006" name="Proc. Natl. Acad. Sci. U.S.A.">
        <title>Evolution of sensory complexity recorded in a myxobacterial genome.</title>
        <authorList>
            <person name="Goldman B.S."/>
            <person name="Nierman W.C."/>
            <person name="Kaiser D."/>
            <person name="Slater S.C."/>
            <person name="Durkin A.S."/>
            <person name="Eisen J.A."/>
            <person name="Ronning C.M."/>
            <person name="Barbazuk W.B."/>
            <person name="Blanchard M."/>
            <person name="Field C."/>
            <person name="Halling C."/>
            <person name="Hinkle G."/>
            <person name="Iartchuk O."/>
            <person name="Kim H.S."/>
            <person name="Mackenzie C."/>
            <person name="Madupu R."/>
            <person name="Miller N."/>
            <person name="Shvartsbeyn A."/>
            <person name="Sullivan S.A."/>
            <person name="Vaudin M."/>
            <person name="Wiegand R."/>
            <person name="Kaplan H.B."/>
        </authorList>
    </citation>
    <scope>NUCLEOTIDE SEQUENCE [LARGE SCALE GENOMIC DNA]</scope>
    <source>
        <strain>DK1622</strain>
    </source>
</reference>
<gene>
    <name type="ordered locus">MXAN_4974</name>
</gene>
<proteinExistence type="inferred from homology"/>
<sequence>MSGHNRWSKIKRQKAAMGATKGKLYSKVVKEITVASRLGGGEPSGNARLRVALAAAREANIPKDTIERAIKKGTGELEGENYEEVTYEGYGPGGVAILVECLTDNRNRTAADMRSTFSAYGGNLGAEGAVAWMFQKKGVISVKYGPSEDQLMEQAIDAGAEDVIMLGDEGSEVRTAAADLHTVAGRLQESGLPLGQQRWVFLPQNTVALDVDTVKKLLKLLDALEENDDVQNVHGNYEIEDAMLDSLLQ</sequence>
<dbReference type="EMBL" id="CP000113">
    <property type="protein sequence ID" value="ABF90542.1"/>
    <property type="molecule type" value="Genomic_DNA"/>
</dbReference>
<dbReference type="RefSeq" id="WP_011554952.1">
    <property type="nucleotide sequence ID" value="NC_008095.1"/>
</dbReference>
<dbReference type="SMR" id="Q1D2J3"/>
<dbReference type="STRING" id="246197.MXAN_4974"/>
<dbReference type="EnsemblBacteria" id="ABF90542">
    <property type="protein sequence ID" value="ABF90542"/>
    <property type="gene ID" value="MXAN_4974"/>
</dbReference>
<dbReference type="GeneID" id="41362259"/>
<dbReference type="KEGG" id="mxa:MXAN_4974"/>
<dbReference type="eggNOG" id="COG0217">
    <property type="taxonomic scope" value="Bacteria"/>
</dbReference>
<dbReference type="HOGENOM" id="CLU_062974_2_2_7"/>
<dbReference type="OrthoDB" id="9781053at2"/>
<dbReference type="Proteomes" id="UP000002402">
    <property type="component" value="Chromosome"/>
</dbReference>
<dbReference type="GO" id="GO:0005829">
    <property type="term" value="C:cytosol"/>
    <property type="evidence" value="ECO:0007669"/>
    <property type="project" value="TreeGrafter"/>
</dbReference>
<dbReference type="GO" id="GO:0003677">
    <property type="term" value="F:DNA binding"/>
    <property type="evidence" value="ECO:0007669"/>
    <property type="project" value="UniProtKB-UniRule"/>
</dbReference>
<dbReference type="GO" id="GO:0006355">
    <property type="term" value="P:regulation of DNA-templated transcription"/>
    <property type="evidence" value="ECO:0007669"/>
    <property type="project" value="UniProtKB-UniRule"/>
</dbReference>
<dbReference type="FunFam" id="1.10.10.200:FF:000002">
    <property type="entry name" value="Probable transcriptional regulatory protein CLM62_37755"/>
    <property type="match status" value="1"/>
</dbReference>
<dbReference type="Gene3D" id="1.10.10.200">
    <property type="match status" value="1"/>
</dbReference>
<dbReference type="Gene3D" id="3.30.70.980">
    <property type="match status" value="2"/>
</dbReference>
<dbReference type="HAMAP" id="MF_00693">
    <property type="entry name" value="Transcrip_reg_TACO1"/>
    <property type="match status" value="1"/>
</dbReference>
<dbReference type="InterPro" id="IPR017856">
    <property type="entry name" value="Integrase-like_N"/>
</dbReference>
<dbReference type="InterPro" id="IPR048300">
    <property type="entry name" value="TACO1_YebC-like_2nd/3rd_dom"/>
</dbReference>
<dbReference type="InterPro" id="IPR049083">
    <property type="entry name" value="TACO1_YebC_N"/>
</dbReference>
<dbReference type="InterPro" id="IPR002876">
    <property type="entry name" value="Transcrip_reg_TACO1-like"/>
</dbReference>
<dbReference type="InterPro" id="IPR026564">
    <property type="entry name" value="Transcrip_reg_TACO1-like_dom3"/>
</dbReference>
<dbReference type="InterPro" id="IPR029072">
    <property type="entry name" value="YebC-like"/>
</dbReference>
<dbReference type="NCBIfam" id="NF001030">
    <property type="entry name" value="PRK00110.1"/>
    <property type="match status" value="1"/>
</dbReference>
<dbReference type="NCBIfam" id="NF009044">
    <property type="entry name" value="PRK12378.1"/>
    <property type="match status" value="1"/>
</dbReference>
<dbReference type="NCBIfam" id="TIGR01033">
    <property type="entry name" value="YebC/PmpR family DNA-binding transcriptional regulator"/>
    <property type="match status" value="1"/>
</dbReference>
<dbReference type="PANTHER" id="PTHR12532:SF6">
    <property type="entry name" value="TRANSCRIPTIONAL REGULATORY PROTEIN YEBC-RELATED"/>
    <property type="match status" value="1"/>
</dbReference>
<dbReference type="PANTHER" id="PTHR12532">
    <property type="entry name" value="TRANSLATIONAL ACTIVATOR OF CYTOCHROME C OXIDASE 1"/>
    <property type="match status" value="1"/>
</dbReference>
<dbReference type="Pfam" id="PF20772">
    <property type="entry name" value="TACO1_YebC_N"/>
    <property type="match status" value="1"/>
</dbReference>
<dbReference type="Pfam" id="PF01709">
    <property type="entry name" value="Transcrip_reg"/>
    <property type="match status" value="1"/>
</dbReference>
<dbReference type="SUPFAM" id="SSF75625">
    <property type="entry name" value="YebC-like"/>
    <property type="match status" value="1"/>
</dbReference>
<evidence type="ECO:0000255" key="1">
    <source>
        <dbReference type="HAMAP-Rule" id="MF_00693"/>
    </source>
</evidence>
<feature type="chain" id="PRO_0000257085" description="Probable transcriptional regulatory protein MXAN_4974">
    <location>
        <begin position="1"/>
        <end position="249"/>
    </location>
</feature>